<accession>A2RI78</accession>
<accession>Q93QH3</accession>
<reference key="1">
    <citation type="journal article" date="2001" name="Arch. Microbiol.">
        <title>Genetic and functional characterization of dpp genes encoding a dipeptide transport system in Lactococcus lactis.</title>
        <authorList>
            <person name="Sanz Y."/>
            <person name="Lanfermeijer F.C."/>
            <person name="Renault P."/>
            <person name="Bolotin A."/>
            <person name="Konings W.N."/>
            <person name="Poolman B."/>
        </authorList>
    </citation>
    <scope>NUCLEOTIDE SEQUENCE [GENOMIC DNA]</scope>
    <scope>FUNCTION</scope>
    <scope>SUBUNIT</scope>
    <scope>DISRUPTION PHENOTYPE</scope>
    <source>
        <strain>MG1363</strain>
    </source>
</reference>
<reference key="2">
    <citation type="journal article" date="2007" name="J. Bacteriol.">
        <title>The complete genome sequence of the lactic acid bacterial paradigm Lactococcus lactis subsp. cremoris MG1363.</title>
        <authorList>
            <person name="Wegmann U."/>
            <person name="O'Connell-Motherway M."/>
            <person name="Zomer A."/>
            <person name="Buist G."/>
            <person name="Shearman C."/>
            <person name="Canchaya C."/>
            <person name="Ventura M."/>
            <person name="Goesmann A."/>
            <person name="Gasson M.J."/>
            <person name="Kuipers O.P."/>
            <person name="van Sinderen D."/>
            <person name="Kok J."/>
        </authorList>
    </citation>
    <scope>NUCLEOTIDE SEQUENCE [LARGE SCALE GENOMIC DNA]</scope>
    <source>
        <strain>MG1363</strain>
    </source>
</reference>
<dbReference type="EC" id="7.4.2.9" evidence="5"/>
<dbReference type="EMBL" id="AF247635">
    <property type="protein sequence ID" value="AAK58901.1"/>
    <property type="molecule type" value="Genomic_DNA"/>
</dbReference>
<dbReference type="EMBL" id="AM406671">
    <property type="protein sequence ID" value="CAL96972.1"/>
    <property type="molecule type" value="Genomic_DNA"/>
</dbReference>
<dbReference type="RefSeq" id="WP_011675407.1">
    <property type="nucleotide sequence ID" value="NC_009004.1"/>
</dbReference>
<dbReference type="SMR" id="A2RI78"/>
<dbReference type="STRING" id="416870.llmg_0367"/>
<dbReference type="GeneID" id="61108671"/>
<dbReference type="KEGG" id="llm:llmg_0367"/>
<dbReference type="eggNOG" id="COG4608">
    <property type="taxonomic scope" value="Bacteria"/>
</dbReference>
<dbReference type="HOGENOM" id="CLU_000604_1_23_9"/>
<dbReference type="PhylomeDB" id="A2RI78"/>
<dbReference type="Proteomes" id="UP000000364">
    <property type="component" value="Chromosome"/>
</dbReference>
<dbReference type="GO" id="GO:0005886">
    <property type="term" value="C:plasma membrane"/>
    <property type="evidence" value="ECO:0007669"/>
    <property type="project" value="UniProtKB-SubCell"/>
</dbReference>
<dbReference type="GO" id="GO:0005524">
    <property type="term" value="F:ATP binding"/>
    <property type="evidence" value="ECO:0007669"/>
    <property type="project" value="UniProtKB-KW"/>
</dbReference>
<dbReference type="GO" id="GO:0016887">
    <property type="term" value="F:ATP hydrolysis activity"/>
    <property type="evidence" value="ECO:0007669"/>
    <property type="project" value="InterPro"/>
</dbReference>
<dbReference type="GO" id="GO:0015833">
    <property type="term" value="P:peptide transport"/>
    <property type="evidence" value="ECO:0007669"/>
    <property type="project" value="UniProtKB-KW"/>
</dbReference>
<dbReference type="GO" id="GO:0015031">
    <property type="term" value="P:protein transport"/>
    <property type="evidence" value="ECO:0007669"/>
    <property type="project" value="UniProtKB-KW"/>
</dbReference>
<dbReference type="GO" id="GO:0055085">
    <property type="term" value="P:transmembrane transport"/>
    <property type="evidence" value="ECO:0007669"/>
    <property type="project" value="UniProtKB-ARBA"/>
</dbReference>
<dbReference type="CDD" id="cd03257">
    <property type="entry name" value="ABC_NikE_OppD_transporters"/>
    <property type="match status" value="1"/>
</dbReference>
<dbReference type="FunFam" id="3.40.50.300:FF:000016">
    <property type="entry name" value="Oligopeptide ABC transporter ATP-binding component"/>
    <property type="match status" value="1"/>
</dbReference>
<dbReference type="Gene3D" id="3.40.50.300">
    <property type="entry name" value="P-loop containing nucleotide triphosphate hydrolases"/>
    <property type="match status" value="1"/>
</dbReference>
<dbReference type="InterPro" id="IPR003593">
    <property type="entry name" value="AAA+_ATPase"/>
</dbReference>
<dbReference type="InterPro" id="IPR050319">
    <property type="entry name" value="ABC_transp_ATP-bind"/>
</dbReference>
<dbReference type="InterPro" id="IPR003439">
    <property type="entry name" value="ABC_transporter-like_ATP-bd"/>
</dbReference>
<dbReference type="InterPro" id="IPR017871">
    <property type="entry name" value="ABC_transporter-like_CS"/>
</dbReference>
<dbReference type="InterPro" id="IPR013563">
    <property type="entry name" value="Oligopep_ABC_C"/>
</dbReference>
<dbReference type="InterPro" id="IPR027417">
    <property type="entry name" value="P-loop_NTPase"/>
</dbReference>
<dbReference type="PANTHER" id="PTHR43776:SF7">
    <property type="entry name" value="D,D-DIPEPTIDE TRANSPORT ATP-BINDING PROTEIN DDPF-RELATED"/>
    <property type="match status" value="1"/>
</dbReference>
<dbReference type="PANTHER" id="PTHR43776">
    <property type="entry name" value="TRANSPORT ATP-BINDING PROTEIN"/>
    <property type="match status" value="1"/>
</dbReference>
<dbReference type="Pfam" id="PF00005">
    <property type="entry name" value="ABC_tran"/>
    <property type="match status" value="1"/>
</dbReference>
<dbReference type="Pfam" id="PF08352">
    <property type="entry name" value="oligo_HPY"/>
    <property type="match status" value="1"/>
</dbReference>
<dbReference type="SMART" id="SM00382">
    <property type="entry name" value="AAA"/>
    <property type="match status" value="1"/>
</dbReference>
<dbReference type="SUPFAM" id="SSF52540">
    <property type="entry name" value="P-loop containing nucleoside triphosphate hydrolases"/>
    <property type="match status" value="1"/>
</dbReference>
<dbReference type="PROSITE" id="PS00211">
    <property type="entry name" value="ABC_TRANSPORTER_1"/>
    <property type="match status" value="1"/>
</dbReference>
<dbReference type="PROSITE" id="PS50893">
    <property type="entry name" value="ABC_TRANSPORTER_2"/>
    <property type="match status" value="1"/>
</dbReference>
<proteinExistence type="evidence at protein level"/>
<organism>
    <name type="scientific">Lactococcus lactis subsp. cremoris (strain MG1363)</name>
    <dbReference type="NCBI Taxonomy" id="416870"/>
    <lineage>
        <taxon>Bacteria</taxon>
        <taxon>Bacillati</taxon>
        <taxon>Bacillota</taxon>
        <taxon>Bacilli</taxon>
        <taxon>Lactobacillales</taxon>
        <taxon>Streptococcaceae</taxon>
        <taxon>Lactococcus</taxon>
        <taxon>Lactococcus cremoris subsp. cremoris</taxon>
    </lineage>
</organism>
<gene>
    <name evidence="3" type="primary">dppF</name>
    <name evidence="6" type="ordered locus">llmg_0367</name>
</gene>
<evidence type="ECO:0000255" key="1">
    <source>
        <dbReference type="PROSITE-ProRule" id="PRU00434"/>
    </source>
</evidence>
<evidence type="ECO:0000269" key="2">
    <source>
    </source>
</evidence>
<evidence type="ECO:0000303" key="3">
    <source>
    </source>
</evidence>
<evidence type="ECO:0000305" key="4"/>
<evidence type="ECO:0000305" key="5">
    <source>
    </source>
</evidence>
<evidence type="ECO:0000312" key="6">
    <source>
        <dbReference type="EMBL" id="CAL96972.1"/>
    </source>
</evidence>
<name>DPPF_LACLM</name>
<protein>
    <recommendedName>
        <fullName evidence="4">Dipeptide transport ATP-binding protein DppF</fullName>
        <ecNumber evidence="5">7.4.2.9</ecNumber>
    </recommendedName>
</protein>
<sequence length="312" mass="34883">MTEPKKVVEIKNLDLTFNKGKKGANKAINNVSLDIYEGETFGLVGESGSGKTTIGRAILKLYDNFITGGEILFEGKDVRNLKGSELREYRSEAQMIFQDPQASLNGRMRVKDIVAEGLDANGLVKTKAERDARVLELLRLVGLNDDHLTRYPHEFSGGQRQRIGIARALAVKPKFVVADEPISALDVSIQAQVVNLMRDIQAKENLTYLFIAHDLSMVKYISDRIGVMHWGKILEVGTSEQVYNHPIHPYTKSLLSSIPSPDPISERQRTPIVYDPTAELDGQEREMREITPGHFVFSTEAEAEVYKKNATL</sequence>
<comment type="function">
    <text evidence="2 4">Part of the ABC transporter DppABCDF involved in dipeptide transport (PubMed:11409543). Responsible for energy coupling to the transport system (Probable).</text>
</comment>
<comment type="catalytic activity">
    <reaction evidence="5">
        <text>a dipeptide(out) + ATP + H2O = a dipeptide(in) + ADP + phosphate + H(+)</text>
        <dbReference type="Rhea" id="RHEA:23120"/>
        <dbReference type="ChEBI" id="CHEBI:15377"/>
        <dbReference type="ChEBI" id="CHEBI:15378"/>
        <dbReference type="ChEBI" id="CHEBI:30616"/>
        <dbReference type="ChEBI" id="CHEBI:43474"/>
        <dbReference type="ChEBI" id="CHEBI:90799"/>
        <dbReference type="ChEBI" id="CHEBI:456216"/>
        <dbReference type="EC" id="7.4.2.9"/>
    </reaction>
</comment>
<comment type="subunit">
    <text evidence="5">The complex is composed of two ATP-binding proteins (DppD and DppF), two transmembrane proteins (DppB and DppC) and a solute-binding protein (DppA).</text>
</comment>
<comment type="subcellular location">
    <subcellularLocation>
        <location evidence="4">Cell membrane</location>
        <topology evidence="4">Peripheral membrane protein</topology>
    </subcellularLocation>
</comment>
<comment type="disruption phenotype">
    <text evidence="2">Inactivation of the gene impairs growth on low concentrations of di-valine.</text>
</comment>
<comment type="similarity">
    <text evidence="4">Belongs to the ABC transporter superfamily.</text>
</comment>
<keyword id="KW-0067">ATP-binding</keyword>
<keyword id="KW-1003">Cell membrane</keyword>
<keyword id="KW-0472">Membrane</keyword>
<keyword id="KW-0547">Nucleotide-binding</keyword>
<keyword id="KW-0571">Peptide transport</keyword>
<keyword id="KW-0653">Protein transport</keyword>
<keyword id="KW-1278">Translocase</keyword>
<keyword id="KW-0813">Transport</keyword>
<feature type="chain" id="PRO_0000452200" description="Dipeptide transport ATP-binding protein DppF">
    <location>
        <begin position="1"/>
        <end position="312"/>
    </location>
</feature>
<feature type="domain" description="ABC transporter" evidence="1">
    <location>
        <begin position="10"/>
        <end position="255"/>
    </location>
</feature>
<feature type="binding site" evidence="1">
    <location>
        <begin position="45"/>
        <end position="52"/>
    </location>
    <ligand>
        <name>ATP</name>
        <dbReference type="ChEBI" id="CHEBI:30616"/>
    </ligand>
</feature>